<protein>
    <recommendedName>
        <fullName evidence="1">Digeranylgeranylglyceryl phosphate synthase</fullName>
        <shortName evidence="1">DGGGP synthase</shortName>
        <shortName evidence="1">DGGGPS</shortName>
        <ecNumber evidence="1">2.5.1.42</ecNumber>
    </recommendedName>
    <alternativeName>
        <fullName evidence="1">(S)-2,3-di-O-geranylgeranylglyceryl phosphate synthase</fullName>
    </alternativeName>
    <alternativeName>
        <fullName evidence="1">Geranylgeranylglycerol-phosphate geranylgeranyltransferase</fullName>
    </alternativeName>
</protein>
<feature type="chain" id="PRO_0000350703" description="Digeranylgeranylglyceryl phosphate synthase">
    <location>
        <begin position="1"/>
        <end position="278"/>
    </location>
</feature>
<feature type="transmembrane region" description="Helical" evidence="1">
    <location>
        <begin position="17"/>
        <end position="37"/>
    </location>
</feature>
<feature type="transmembrane region" description="Helical" evidence="1">
    <location>
        <begin position="40"/>
        <end position="60"/>
    </location>
</feature>
<feature type="transmembrane region" description="Helical" evidence="1">
    <location>
        <begin position="91"/>
        <end position="111"/>
    </location>
</feature>
<feature type="transmembrane region" description="Helical" evidence="1">
    <location>
        <begin position="129"/>
        <end position="149"/>
    </location>
</feature>
<feature type="transmembrane region" description="Helical" evidence="1">
    <location>
        <begin position="153"/>
        <end position="173"/>
    </location>
</feature>
<feature type="transmembrane region" description="Helical" evidence="1">
    <location>
        <begin position="204"/>
        <end position="224"/>
    </location>
</feature>
<feature type="transmembrane region" description="Helical" evidence="1">
    <location>
        <begin position="226"/>
        <end position="246"/>
    </location>
</feature>
<feature type="transmembrane region" description="Helical" evidence="1">
    <location>
        <begin position="257"/>
        <end position="277"/>
    </location>
</feature>
<organism>
    <name type="scientific">Methanococcus maripaludis (strain C5 / ATCC BAA-1333)</name>
    <dbReference type="NCBI Taxonomy" id="402880"/>
    <lineage>
        <taxon>Archaea</taxon>
        <taxon>Methanobacteriati</taxon>
        <taxon>Methanobacteriota</taxon>
        <taxon>Methanomada group</taxon>
        <taxon>Methanococci</taxon>
        <taxon>Methanococcales</taxon>
        <taxon>Methanococcaceae</taxon>
        <taxon>Methanococcus</taxon>
    </lineage>
</organism>
<evidence type="ECO:0000255" key="1">
    <source>
        <dbReference type="HAMAP-Rule" id="MF_01286"/>
    </source>
</evidence>
<gene>
    <name type="ordered locus">MmarC5_1730</name>
</gene>
<keyword id="KW-1003">Cell membrane</keyword>
<keyword id="KW-0444">Lipid biosynthesis</keyword>
<keyword id="KW-0443">Lipid metabolism</keyword>
<keyword id="KW-0460">Magnesium</keyword>
<keyword id="KW-0472">Membrane</keyword>
<keyword id="KW-0594">Phospholipid biosynthesis</keyword>
<keyword id="KW-1208">Phospholipid metabolism</keyword>
<keyword id="KW-0808">Transferase</keyword>
<keyword id="KW-0812">Transmembrane</keyword>
<keyword id="KW-1133">Transmembrane helix</keyword>
<accession>A4G0P3</accession>
<comment type="function">
    <text evidence="1">Prenyltransferase that catalyzes the transfer of the geranylgeranyl moiety of geranylgeranyl diphosphate (GGPP) to the C2 hydroxyl of (S)-3-O-geranylgeranylglyceryl phosphate (GGGP). This reaction is the second ether-bond-formation step in the biosynthesis of archaeal membrane lipids.</text>
</comment>
<comment type="catalytic activity">
    <reaction evidence="1">
        <text>sn-3-O-(geranylgeranyl)glycerol 1-phosphate + (2E,6E,10E)-geranylgeranyl diphosphate = 2,3-bis-O-(geranylgeranyl)-sn-glycerol 1-phosphate + diphosphate</text>
        <dbReference type="Rhea" id="RHEA:18109"/>
        <dbReference type="ChEBI" id="CHEBI:33019"/>
        <dbReference type="ChEBI" id="CHEBI:57677"/>
        <dbReference type="ChEBI" id="CHEBI:58756"/>
        <dbReference type="ChEBI" id="CHEBI:58837"/>
        <dbReference type="EC" id="2.5.1.42"/>
    </reaction>
</comment>
<comment type="cofactor">
    <cofactor evidence="1">
        <name>Mg(2+)</name>
        <dbReference type="ChEBI" id="CHEBI:18420"/>
    </cofactor>
</comment>
<comment type="pathway">
    <text evidence="1">Membrane lipid metabolism; glycerophospholipid metabolism.</text>
</comment>
<comment type="subcellular location">
    <subcellularLocation>
        <location evidence="1">Cell membrane</location>
        <topology evidence="1">Multi-pass membrane protein</topology>
    </subcellularLocation>
</comment>
<comment type="similarity">
    <text evidence="1">Belongs to the UbiA prenyltransferase family. DGGGP synthase subfamily.</text>
</comment>
<proteinExistence type="inferred from homology"/>
<dbReference type="EC" id="2.5.1.42" evidence="1"/>
<dbReference type="EMBL" id="CP000609">
    <property type="protein sequence ID" value="ABO36027.1"/>
    <property type="molecule type" value="Genomic_DNA"/>
</dbReference>
<dbReference type="RefSeq" id="WP_011869473.1">
    <property type="nucleotide sequence ID" value="NC_009135.1"/>
</dbReference>
<dbReference type="SMR" id="A4G0P3"/>
<dbReference type="STRING" id="402880.MmarC5_1730"/>
<dbReference type="GeneID" id="4928016"/>
<dbReference type="KEGG" id="mmq:MmarC5_1730"/>
<dbReference type="eggNOG" id="arCOG00476">
    <property type="taxonomic scope" value="Archaea"/>
</dbReference>
<dbReference type="HOGENOM" id="CLU_073311_1_1_2"/>
<dbReference type="OrthoDB" id="11851at2157"/>
<dbReference type="UniPathway" id="UPA00940"/>
<dbReference type="Proteomes" id="UP000000253">
    <property type="component" value="Chromosome"/>
</dbReference>
<dbReference type="GO" id="GO:0005886">
    <property type="term" value="C:plasma membrane"/>
    <property type="evidence" value="ECO:0007669"/>
    <property type="project" value="UniProtKB-SubCell"/>
</dbReference>
<dbReference type="GO" id="GO:0047295">
    <property type="term" value="F:geranylgeranylglycerol-phosphate geranylgeranyltransferase activity"/>
    <property type="evidence" value="ECO:0007669"/>
    <property type="project" value="UniProtKB-UniRule"/>
</dbReference>
<dbReference type="GO" id="GO:0000287">
    <property type="term" value="F:magnesium ion binding"/>
    <property type="evidence" value="ECO:0007669"/>
    <property type="project" value="UniProtKB-UniRule"/>
</dbReference>
<dbReference type="GO" id="GO:0046474">
    <property type="term" value="P:glycerophospholipid biosynthetic process"/>
    <property type="evidence" value="ECO:0007669"/>
    <property type="project" value="UniProtKB-UniRule"/>
</dbReference>
<dbReference type="CDD" id="cd13961">
    <property type="entry name" value="PT_UbiA_DGGGPS"/>
    <property type="match status" value="1"/>
</dbReference>
<dbReference type="Gene3D" id="1.10.357.140">
    <property type="entry name" value="UbiA prenyltransferase"/>
    <property type="match status" value="1"/>
</dbReference>
<dbReference type="Gene3D" id="1.20.120.1780">
    <property type="entry name" value="UbiA prenyltransferase"/>
    <property type="match status" value="1"/>
</dbReference>
<dbReference type="HAMAP" id="MF_01286">
    <property type="entry name" value="DGGGP_synth"/>
    <property type="match status" value="1"/>
</dbReference>
<dbReference type="InterPro" id="IPR023547">
    <property type="entry name" value="DGGGP_synth"/>
</dbReference>
<dbReference type="InterPro" id="IPR050475">
    <property type="entry name" value="Prenyltransferase_related"/>
</dbReference>
<dbReference type="InterPro" id="IPR000537">
    <property type="entry name" value="UbiA_prenyltransferase"/>
</dbReference>
<dbReference type="InterPro" id="IPR044878">
    <property type="entry name" value="UbiA_sf"/>
</dbReference>
<dbReference type="PANTHER" id="PTHR42723">
    <property type="entry name" value="CHLOROPHYLL SYNTHASE"/>
    <property type="match status" value="1"/>
</dbReference>
<dbReference type="PANTHER" id="PTHR42723:SF1">
    <property type="entry name" value="CHLOROPHYLL SYNTHASE, CHLOROPLASTIC"/>
    <property type="match status" value="1"/>
</dbReference>
<dbReference type="Pfam" id="PF01040">
    <property type="entry name" value="UbiA"/>
    <property type="match status" value="1"/>
</dbReference>
<reference key="1">
    <citation type="submission" date="2007-03" db="EMBL/GenBank/DDBJ databases">
        <title>Complete sequence of chromosome of Methanococcus maripaludis C5.</title>
        <authorList>
            <consortium name="US DOE Joint Genome Institute"/>
            <person name="Copeland A."/>
            <person name="Lucas S."/>
            <person name="Lapidus A."/>
            <person name="Barry K."/>
            <person name="Glavina del Rio T."/>
            <person name="Dalin E."/>
            <person name="Tice H."/>
            <person name="Pitluck S."/>
            <person name="Chertkov O."/>
            <person name="Brettin T."/>
            <person name="Bruce D."/>
            <person name="Han C."/>
            <person name="Detter J.C."/>
            <person name="Schmutz J."/>
            <person name="Larimer F."/>
            <person name="Land M."/>
            <person name="Hauser L."/>
            <person name="Kyrpides N."/>
            <person name="Mikhailova N."/>
            <person name="Sieprawska-Lupa M."/>
            <person name="Whitman W.B."/>
            <person name="Richardson P."/>
        </authorList>
    </citation>
    <scope>NUCLEOTIDE SEQUENCE [LARGE SCALE GENOMIC DNA]</scope>
    <source>
        <strain>C5 / ATCC BAA-1333</strain>
    </source>
</reference>
<sequence length="278" mass="30988">MGIKAYFELIRLNNCLMASFGAFIGGLIASYFNLEMVNNLIFASIVVFLVCGFGNALNDIYDLKIDRINKPERPIPSKRISLTNARIFSYLLVFTGLCISLFNITCFLMAVLNSIVLQQYASTYKKNKIIGNLIVAYLTGSVFIFGGIAVGNIDVTIMLFLCALFAMWSREIIKDYEDIEGDIQEKVISIPIKCGENSIYIAALLLVFAVLLSSLPYLFGFFGIYYLISVVFCDLLFLIGIFPLLINPSRRGAKNASRNIKIVTNLVLVAFVIGSFFK</sequence>
<name>DGGGP_METM5</name>